<dbReference type="EC" id="3.5.2.9" evidence="1"/>
<dbReference type="EMBL" id="CP001616">
    <property type="protein sequence ID" value="ACQ93465.1"/>
    <property type="molecule type" value="Genomic_DNA"/>
</dbReference>
<dbReference type="RefSeq" id="WP_015878936.1">
    <property type="nucleotide sequence ID" value="NC_012691.1"/>
</dbReference>
<dbReference type="SMR" id="C4LFU8"/>
<dbReference type="STRING" id="595494.Tola_1858"/>
<dbReference type="KEGG" id="tau:Tola_1858"/>
<dbReference type="eggNOG" id="COG1540">
    <property type="taxonomic scope" value="Bacteria"/>
</dbReference>
<dbReference type="HOGENOM" id="CLU_069535_0_0_6"/>
<dbReference type="OrthoDB" id="9773478at2"/>
<dbReference type="Proteomes" id="UP000009073">
    <property type="component" value="Chromosome"/>
</dbReference>
<dbReference type="GO" id="GO:0017168">
    <property type="term" value="F:5-oxoprolinase (ATP-hydrolyzing) activity"/>
    <property type="evidence" value="ECO:0007669"/>
    <property type="project" value="UniProtKB-UniRule"/>
</dbReference>
<dbReference type="GO" id="GO:0005524">
    <property type="term" value="F:ATP binding"/>
    <property type="evidence" value="ECO:0007669"/>
    <property type="project" value="UniProtKB-UniRule"/>
</dbReference>
<dbReference type="GO" id="GO:0005975">
    <property type="term" value="P:carbohydrate metabolic process"/>
    <property type="evidence" value="ECO:0007669"/>
    <property type="project" value="InterPro"/>
</dbReference>
<dbReference type="CDD" id="cd10787">
    <property type="entry name" value="LamB_YcsF_like"/>
    <property type="match status" value="1"/>
</dbReference>
<dbReference type="Gene3D" id="3.20.20.370">
    <property type="entry name" value="Glycoside hydrolase/deacetylase"/>
    <property type="match status" value="1"/>
</dbReference>
<dbReference type="HAMAP" id="MF_00691">
    <property type="entry name" value="PxpA"/>
    <property type="match status" value="1"/>
</dbReference>
<dbReference type="InterPro" id="IPR011330">
    <property type="entry name" value="Glyco_hydro/deAcase_b/a-brl"/>
</dbReference>
<dbReference type="InterPro" id="IPR005501">
    <property type="entry name" value="LamB/YcsF/PxpA-like"/>
</dbReference>
<dbReference type="NCBIfam" id="NF003814">
    <property type="entry name" value="PRK05406.1-3"/>
    <property type="match status" value="1"/>
</dbReference>
<dbReference type="NCBIfam" id="NF003816">
    <property type="entry name" value="PRK05406.1-5"/>
    <property type="match status" value="1"/>
</dbReference>
<dbReference type="PANTHER" id="PTHR30292:SF0">
    <property type="entry name" value="5-OXOPROLINASE SUBUNIT A"/>
    <property type="match status" value="1"/>
</dbReference>
<dbReference type="PANTHER" id="PTHR30292">
    <property type="entry name" value="UNCHARACTERIZED PROTEIN YBGL-RELATED"/>
    <property type="match status" value="1"/>
</dbReference>
<dbReference type="Pfam" id="PF03746">
    <property type="entry name" value="LamB_YcsF"/>
    <property type="match status" value="1"/>
</dbReference>
<dbReference type="SUPFAM" id="SSF88713">
    <property type="entry name" value="Glycoside hydrolase/deacetylase"/>
    <property type="match status" value="1"/>
</dbReference>
<feature type="chain" id="PRO_1000212586" description="5-oxoprolinase subunit A">
    <location>
        <begin position="1"/>
        <end position="251"/>
    </location>
</feature>
<reference key="1">
    <citation type="submission" date="2009-05" db="EMBL/GenBank/DDBJ databases">
        <title>Complete sequence of Tolumonas auensis DSM 9187.</title>
        <authorList>
            <consortium name="US DOE Joint Genome Institute"/>
            <person name="Lucas S."/>
            <person name="Copeland A."/>
            <person name="Lapidus A."/>
            <person name="Glavina del Rio T."/>
            <person name="Tice H."/>
            <person name="Bruce D."/>
            <person name="Goodwin L."/>
            <person name="Pitluck S."/>
            <person name="Chertkov O."/>
            <person name="Brettin T."/>
            <person name="Detter J.C."/>
            <person name="Han C."/>
            <person name="Larimer F."/>
            <person name="Land M."/>
            <person name="Hauser L."/>
            <person name="Kyrpides N."/>
            <person name="Mikhailova N."/>
            <person name="Spring S."/>
            <person name="Beller H."/>
        </authorList>
    </citation>
    <scope>NUCLEOTIDE SEQUENCE [LARGE SCALE GENOMIC DNA]</scope>
    <source>
        <strain>DSM 9187 / NBRC 110442 / TA 4</strain>
    </source>
</reference>
<protein>
    <recommendedName>
        <fullName evidence="1">5-oxoprolinase subunit A</fullName>
        <shortName evidence="1">5-OPase subunit A</shortName>
        <ecNumber evidence="1">3.5.2.9</ecNumber>
    </recommendedName>
    <alternativeName>
        <fullName evidence="1">5-oxoprolinase (ATP-hydrolyzing) subunit A</fullName>
    </alternativeName>
</protein>
<accession>C4LFU8</accession>
<keyword id="KW-0067">ATP-binding</keyword>
<keyword id="KW-0378">Hydrolase</keyword>
<keyword id="KW-0547">Nucleotide-binding</keyword>
<keyword id="KW-1185">Reference proteome</keyword>
<proteinExistence type="inferred from homology"/>
<comment type="function">
    <text evidence="1">Catalyzes the cleavage of 5-oxoproline to form L-glutamate coupled to the hydrolysis of ATP to ADP and inorganic phosphate.</text>
</comment>
<comment type="catalytic activity">
    <reaction evidence="1">
        <text>5-oxo-L-proline + ATP + 2 H2O = L-glutamate + ADP + phosphate + H(+)</text>
        <dbReference type="Rhea" id="RHEA:10348"/>
        <dbReference type="ChEBI" id="CHEBI:15377"/>
        <dbReference type="ChEBI" id="CHEBI:15378"/>
        <dbReference type="ChEBI" id="CHEBI:29985"/>
        <dbReference type="ChEBI" id="CHEBI:30616"/>
        <dbReference type="ChEBI" id="CHEBI:43474"/>
        <dbReference type="ChEBI" id="CHEBI:58402"/>
        <dbReference type="ChEBI" id="CHEBI:456216"/>
        <dbReference type="EC" id="3.5.2.9"/>
    </reaction>
</comment>
<comment type="subunit">
    <text evidence="1">Forms a complex composed of PxpA, PxpB and PxpC.</text>
</comment>
<comment type="similarity">
    <text evidence="1">Belongs to the LamB/PxpA family.</text>
</comment>
<sequence>MAQVDLNCDMGESFGIYQMGTDTQIMPLVSSANIACGFHAGDPSVMRKTLEAAVAQGVALGAHPGLPDLVGFGRRNMQVSAQEAYDMVVYQVGALAGFAKAAGVSLHHVKPHGALYNMAAKDKALADAIARAVRDIDASLVLYGLAGSQLIQAGKNAGLRVASEVFADRTYQADGSLTSRSQPNALLQSDEEAVQQVLTMVTEKRVKAVTGEWVSLDADTICIHGDGAHALSFATKVRAALLQAGVEIKAM</sequence>
<gene>
    <name evidence="1" type="primary">pxpA</name>
    <name type="ordered locus">Tola_1858</name>
</gene>
<evidence type="ECO:0000255" key="1">
    <source>
        <dbReference type="HAMAP-Rule" id="MF_00691"/>
    </source>
</evidence>
<name>PXPA_TOLAT</name>
<organism>
    <name type="scientific">Tolumonas auensis (strain DSM 9187 / NBRC 110442 / TA 4)</name>
    <dbReference type="NCBI Taxonomy" id="595494"/>
    <lineage>
        <taxon>Bacteria</taxon>
        <taxon>Pseudomonadati</taxon>
        <taxon>Pseudomonadota</taxon>
        <taxon>Gammaproteobacteria</taxon>
        <taxon>Aeromonadales</taxon>
        <taxon>Aeromonadaceae</taxon>
        <taxon>Tolumonas</taxon>
    </lineage>
</organism>